<protein>
    <recommendedName>
        <fullName evidence="1">3-dehydroquinate dehydratase</fullName>
        <shortName evidence="1">3-dehydroquinase</shortName>
        <ecNumber evidence="1">4.2.1.10</ecNumber>
    </recommendedName>
    <alternativeName>
        <fullName evidence="1">Type I DHQase</fullName>
    </alternativeName>
    <alternativeName>
        <fullName evidence="1">Type I dehydroquinase</fullName>
        <shortName evidence="1">DHQ1</shortName>
    </alternativeName>
</protein>
<dbReference type="EC" id="4.2.1.10" evidence="1"/>
<dbReference type="EMBL" id="CP000477">
    <property type="protein sequence ID" value="ABK14331.1"/>
    <property type="molecule type" value="Genomic_DNA"/>
</dbReference>
<dbReference type="RefSeq" id="WP_011695728.1">
    <property type="nucleotide sequence ID" value="NC_008553.1"/>
</dbReference>
<dbReference type="SMR" id="A0B6K7"/>
<dbReference type="STRING" id="349307.Mthe_0540"/>
<dbReference type="GeneID" id="4463000"/>
<dbReference type="KEGG" id="mtp:Mthe_0540"/>
<dbReference type="HOGENOM" id="CLU_064444_2_1_2"/>
<dbReference type="OrthoDB" id="34329at2157"/>
<dbReference type="UniPathway" id="UPA00053">
    <property type="reaction ID" value="UER00086"/>
</dbReference>
<dbReference type="Proteomes" id="UP000000674">
    <property type="component" value="Chromosome"/>
</dbReference>
<dbReference type="GO" id="GO:0003855">
    <property type="term" value="F:3-dehydroquinate dehydratase activity"/>
    <property type="evidence" value="ECO:0007669"/>
    <property type="project" value="UniProtKB-UniRule"/>
</dbReference>
<dbReference type="GO" id="GO:0046279">
    <property type="term" value="P:3,4-dihydroxybenzoate biosynthetic process"/>
    <property type="evidence" value="ECO:0007669"/>
    <property type="project" value="TreeGrafter"/>
</dbReference>
<dbReference type="GO" id="GO:0008652">
    <property type="term" value="P:amino acid biosynthetic process"/>
    <property type="evidence" value="ECO:0007669"/>
    <property type="project" value="UniProtKB-KW"/>
</dbReference>
<dbReference type="GO" id="GO:0009073">
    <property type="term" value="P:aromatic amino acid family biosynthetic process"/>
    <property type="evidence" value="ECO:0007669"/>
    <property type="project" value="UniProtKB-KW"/>
</dbReference>
<dbReference type="GO" id="GO:0009423">
    <property type="term" value="P:chorismate biosynthetic process"/>
    <property type="evidence" value="ECO:0007669"/>
    <property type="project" value="UniProtKB-UniRule"/>
</dbReference>
<dbReference type="CDD" id="cd00502">
    <property type="entry name" value="DHQase_I"/>
    <property type="match status" value="1"/>
</dbReference>
<dbReference type="Gene3D" id="3.20.20.70">
    <property type="entry name" value="Aldolase class I"/>
    <property type="match status" value="1"/>
</dbReference>
<dbReference type="HAMAP" id="MF_00214">
    <property type="entry name" value="AroD"/>
    <property type="match status" value="1"/>
</dbReference>
<dbReference type="InterPro" id="IPR013785">
    <property type="entry name" value="Aldolase_TIM"/>
</dbReference>
<dbReference type="InterPro" id="IPR001381">
    <property type="entry name" value="DHquinase_I"/>
</dbReference>
<dbReference type="InterPro" id="IPR050146">
    <property type="entry name" value="Type-I_3-dehydroquinase"/>
</dbReference>
<dbReference type="PANTHER" id="PTHR43699">
    <property type="entry name" value="3-DEHYDROQUINATE DEHYDRATASE"/>
    <property type="match status" value="1"/>
</dbReference>
<dbReference type="PANTHER" id="PTHR43699:SF1">
    <property type="entry name" value="3-DEHYDROQUINATE DEHYDRATASE"/>
    <property type="match status" value="1"/>
</dbReference>
<dbReference type="Pfam" id="PF01487">
    <property type="entry name" value="DHquinase_I"/>
    <property type="match status" value="1"/>
</dbReference>
<dbReference type="SUPFAM" id="SSF51569">
    <property type="entry name" value="Aldolase"/>
    <property type="match status" value="1"/>
</dbReference>
<feature type="chain" id="PRO_0000325538" description="3-dehydroquinate dehydratase">
    <location>
        <begin position="1"/>
        <end position="226"/>
    </location>
</feature>
<feature type="active site" description="Proton donor/acceptor" evidence="1">
    <location>
        <position position="124"/>
    </location>
</feature>
<feature type="active site" description="Schiff-base intermediate with substrate" evidence="1">
    <location>
        <position position="149"/>
    </location>
</feature>
<feature type="binding site" evidence="1">
    <location>
        <position position="21"/>
    </location>
    <ligand>
        <name>3-dehydroquinate</name>
        <dbReference type="ChEBI" id="CHEBI:32364"/>
    </ligand>
</feature>
<feature type="binding site" evidence="1">
    <location>
        <begin position="42"/>
        <end position="44"/>
    </location>
    <ligand>
        <name>3-dehydroquinate</name>
        <dbReference type="ChEBI" id="CHEBI:32364"/>
    </ligand>
</feature>
<feature type="binding site" evidence="1">
    <location>
        <position position="70"/>
    </location>
    <ligand>
        <name>3-dehydroquinate</name>
        <dbReference type="ChEBI" id="CHEBI:32364"/>
    </ligand>
</feature>
<feature type="binding site" evidence="1">
    <location>
        <position position="187"/>
    </location>
    <ligand>
        <name>3-dehydroquinate</name>
        <dbReference type="ChEBI" id="CHEBI:32364"/>
    </ligand>
</feature>
<feature type="binding site" evidence="1">
    <location>
        <position position="206"/>
    </location>
    <ligand>
        <name>3-dehydroquinate</name>
        <dbReference type="ChEBI" id="CHEBI:32364"/>
    </ligand>
</feature>
<feature type="binding site" evidence="1">
    <location>
        <position position="210"/>
    </location>
    <ligand>
        <name>3-dehydroquinate</name>
        <dbReference type="ChEBI" id="CHEBI:32364"/>
    </ligand>
</feature>
<keyword id="KW-0028">Amino-acid biosynthesis</keyword>
<keyword id="KW-0057">Aromatic amino acid biosynthesis</keyword>
<keyword id="KW-0456">Lyase</keyword>
<keyword id="KW-1185">Reference proteome</keyword>
<keyword id="KW-0704">Schiff base</keyword>
<organism>
    <name type="scientific">Methanothrix thermoacetophila (strain DSM 6194 / JCM 14653 / NBRC 101360 / PT)</name>
    <name type="common">Methanosaeta thermophila</name>
    <dbReference type="NCBI Taxonomy" id="349307"/>
    <lineage>
        <taxon>Archaea</taxon>
        <taxon>Methanobacteriati</taxon>
        <taxon>Methanobacteriota</taxon>
        <taxon>Stenosarchaea group</taxon>
        <taxon>Methanomicrobia</taxon>
        <taxon>Methanotrichales</taxon>
        <taxon>Methanotrichaceae</taxon>
        <taxon>Methanothrix</taxon>
    </lineage>
</organism>
<evidence type="ECO:0000255" key="1">
    <source>
        <dbReference type="HAMAP-Rule" id="MF_00214"/>
    </source>
</evidence>
<comment type="function">
    <text evidence="1">Involved in the third step of the chorismate pathway, which leads to the biosynthesis of aromatic amino acids. Catalyzes the cis-dehydration of 3-dehydroquinate (DHQ) and introduces the first double bond of the aromatic ring to yield 3-dehydroshikimate.</text>
</comment>
<comment type="catalytic activity">
    <reaction evidence="1">
        <text>3-dehydroquinate = 3-dehydroshikimate + H2O</text>
        <dbReference type="Rhea" id="RHEA:21096"/>
        <dbReference type="ChEBI" id="CHEBI:15377"/>
        <dbReference type="ChEBI" id="CHEBI:16630"/>
        <dbReference type="ChEBI" id="CHEBI:32364"/>
        <dbReference type="EC" id="4.2.1.10"/>
    </reaction>
</comment>
<comment type="pathway">
    <text evidence="1">Metabolic intermediate biosynthesis; chorismate biosynthesis; chorismate from D-erythrose 4-phosphate and phosphoenolpyruvate: step 3/7.</text>
</comment>
<comment type="subunit">
    <text evidence="1">Homodimer.</text>
</comment>
<comment type="similarity">
    <text evidence="1">Belongs to the type-I 3-dehydroquinase family.</text>
</comment>
<accession>A0B6K7</accession>
<sequence>MCLRELDLNGLRIKTPAIVASLGADAERVASRAESEGADIIEVRLDLLADPDVIRDIRSTVSLPLIATNRIASEGGSFRGSEERRISILRDASRFSDIIDIELMAPGRDMLLKNISCPALISYHDFSGVPDNLKSIIEDAMRAGADLVKIAVTPHSMQEALAILRILLDVDCPLCIIGMGAVGRHLRAVAPLYGSLLTYGYVTGPTAPGQMSVRELDTALRCLGAR</sequence>
<gene>
    <name evidence="1" type="primary">aroD</name>
    <name type="ordered locus">Mthe_0540</name>
</gene>
<reference key="1">
    <citation type="submission" date="2006-10" db="EMBL/GenBank/DDBJ databases">
        <title>Complete sequence of Methanosaeta thermophila PT.</title>
        <authorList>
            <consortium name="US DOE Joint Genome Institute"/>
            <person name="Copeland A."/>
            <person name="Lucas S."/>
            <person name="Lapidus A."/>
            <person name="Barry K."/>
            <person name="Detter J.C."/>
            <person name="Glavina del Rio T."/>
            <person name="Hammon N."/>
            <person name="Israni S."/>
            <person name="Pitluck S."/>
            <person name="Chain P."/>
            <person name="Malfatti S."/>
            <person name="Shin M."/>
            <person name="Vergez L."/>
            <person name="Schmutz J."/>
            <person name="Larimer F."/>
            <person name="Land M."/>
            <person name="Hauser L."/>
            <person name="Kyrpides N."/>
            <person name="Kim E."/>
            <person name="Smith K.S."/>
            <person name="Ingram-Smith C."/>
            <person name="Richardson P."/>
        </authorList>
    </citation>
    <scope>NUCLEOTIDE SEQUENCE [LARGE SCALE GENOMIC DNA]</scope>
    <source>
        <strain>DSM 6194 / JCM 14653 / NBRC 101360 / PT</strain>
    </source>
</reference>
<proteinExistence type="inferred from homology"/>
<name>AROD_METTP</name>